<feature type="chain" id="PRO_0000096296" description="Microcephalin">
    <location>
        <begin position="1"/>
        <end position="835"/>
    </location>
</feature>
<feature type="domain" description="BRCT 1" evidence="2">
    <location>
        <begin position="1"/>
        <end position="93"/>
    </location>
</feature>
<feature type="domain" description="BRCT 2" evidence="2">
    <location>
        <begin position="640"/>
        <end position="730"/>
    </location>
</feature>
<feature type="domain" description="BRCT 3" evidence="2">
    <location>
        <begin position="751"/>
        <end position="833"/>
    </location>
</feature>
<feature type="region of interest" description="Disordered" evidence="3">
    <location>
        <begin position="313"/>
        <end position="381"/>
    </location>
</feature>
<feature type="region of interest" description="Disordered" evidence="3">
    <location>
        <begin position="419"/>
        <end position="443"/>
    </location>
</feature>
<feature type="region of interest" description="Disordered" evidence="3">
    <location>
        <begin position="555"/>
        <end position="584"/>
    </location>
</feature>
<feature type="compositionally biased region" description="Basic residues" evidence="3">
    <location>
        <begin position="343"/>
        <end position="361"/>
    </location>
</feature>
<feature type="compositionally biased region" description="Polar residues" evidence="3">
    <location>
        <begin position="434"/>
        <end position="443"/>
    </location>
</feature>
<feature type="compositionally biased region" description="Polar residues" evidence="3">
    <location>
        <begin position="559"/>
        <end position="577"/>
    </location>
</feature>
<feature type="modified residue" description="Phosphoserine" evidence="22">
    <location>
        <position position="279"/>
    </location>
</feature>
<feature type="modified residue" description="Phosphoserine" evidence="22">
    <location>
        <position position="287"/>
    </location>
</feature>
<feature type="modified residue" description="Phosphoserine" evidence="1">
    <location>
        <position position="296"/>
    </location>
</feature>
<feature type="modified residue" description="Phosphoserine" evidence="21">
    <location>
        <position position="333"/>
    </location>
</feature>
<feature type="modified residue" description="Phosphothreonine" evidence="22">
    <location>
        <position position="335"/>
    </location>
</feature>
<feature type="modified residue" description="Phosphoserine" evidence="22">
    <location>
        <position position="548"/>
    </location>
</feature>
<feature type="splice variant" id="VSP_046135" description="In isoform 2." evidence="18 19">
    <original>DDDVPILLFESNGSLIYTPTIEINSRHHSAMEKRLQEMKEKRENLSPTS</original>
    <variation>A</variation>
    <location>
        <begin position="146"/>
        <end position="194"/>
    </location>
</feature>
<feature type="splice variant" id="VSP_046136" description="In isoform 2 and isoform 3." evidence="18 19">
    <original>V</original>
    <variation>M</variation>
    <location>
        <position position="610"/>
    </location>
</feature>
<feature type="splice variant" id="VSP_046137" description="In isoform 2 and isoform 3." evidence="18 19">
    <location>
        <begin position="611"/>
        <end position="835"/>
    </location>
</feature>
<feature type="sequence variant" id="VAR_046745" description="In MCPH1; mild phenotype; dbSNP:rs199422124." evidence="9">
    <original>T</original>
    <variation>R</variation>
    <location>
        <position position="27"/>
    </location>
</feature>
<feature type="sequence variant" id="VAR_046746" description="In dbSNP:rs2442513." evidence="5 8 15 16">
    <original>R</original>
    <variation>S</variation>
    <location>
        <position position="171"/>
    </location>
</feature>
<feature type="sequence variant" id="VAR_046747" description="In dbSNP:rs2922828.">
    <original>A</original>
    <variation>T</variation>
    <location>
        <position position="212"/>
    </location>
</feature>
<feature type="sequence variant" id="VAR_046748" description="In dbSNP:rs34121009.">
    <original>I</original>
    <variation>V</variation>
    <location>
        <position position="264"/>
    </location>
</feature>
<feature type="sequence variant" id="VAR_046749" description="In dbSNP:rs35590577.">
    <original>P</original>
    <variation>H</variation>
    <location>
        <position position="288"/>
    </location>
</feature>
<feature type="sequence variant" id="VAR_046750" description="In dbSNP:rs2083914.">
    <original>R</original>
    <variation>I</variation>
    <location>
        <position position="304"/>
    </location>
</feature>
<feature type="sequence variant" id="VAR_046751" description="In dbSNP:rs930557." evidence="5 8 11 16">
    <original>D</original>
    <variation>H</variation>
    <location>
        <position position="314"/>
    </location>
</feature>
<feature type="sequence variant" id="VAR_046752" description="In dbSNP:rs2515569." evidence="5 8 15 16">
    <original>D</original>
    <variation>G</variation>
    <location>
        <position position="392"/>
    </location>
</feature>
<feature type="sequence variant" id="VAR_046753" description="In dbSNP:rs17076894.">
    <original>S</original>
    <variation>G</variation>
    <location>
        <position position="580"/>
    </location>
</feature>
<feature type="sequence variant" id="VAR_046754" description="In dbSNP:rs34418490.">
    <original>L</original>
    <variation>F</variation>
    <location>
        <position position="602"/>
    </location>
</feature>
<feature type="sequence variant" id="VAR_046755" description="In dbSNP:rs12674488.">
    <original>T</original>
    <variation>N</variation>
    <location>
        <position position="682"/>
    </location>
</feature>
<feature type="sequence variant" id="VAR_046756" description="In dbSNP:rs1057090." evidence="11">
    <original>A</original>
    <variation>V</variation>
    <location>
        <position position="761"/>
    </location>
</feature>
<feature type="sequence variant" id="VAR_046757" description="In dbSNP:rs1057091." evidence="11">
    <original>P</original>
    <variation>S</variation>
    <location>
        <position position="828"/>
    </location>
</feature>
<feature type="turn" evidence="23">
    <location>
        <begin position="5"/>
        <end position="8"/>
    </location>
</feature>
<feature type="strand" evidence="23">
    <location>
        <begin position="10"/>
        <end position="16"/>
    </location>
</feature>
<feature type="helix" evidence="23">
    <location>
        <begin position="25"/>
        <end position="34"/>
    </location>
</feature>
<feature type="strand" evidence="23">
    <location>
        <begin position="49"/>
        <end position="54"/>
    </location>
</feature>
<feature type="helix" evidence="23">
    <location>
        <begin position="57"/>
        <end position="66"/>
    </location>
</feature>
<feature type="strand" evidence="23">
    <location>
        <begin position="69"/>
        <end position="71"/>
    </location>
</feature>
<feature type="helix" evidence="23">
    <location>
        <begin position="73"/>
        <end position="82"/>
    </location>
</feature>
<feature type="helix" evidence="23">
    <location>
        <begin position="88"/>
        <end position="90"/>
    </location>
</feature>
<feature type="turn" evidence="23">
    <location>
        <begin position="96"/>
        <end position="99"/>
    </location>
</feature>
<feature type="helix" evidence="26">
    <location>
        <begin position="326"/>
        <end position="329"/>
    </location>
</feature>
<feature type="strand" evidence="25">
    <location>
        <begin position="649"/>
        <end position="654"/>
    </location>
</feature>
<feature type="helix" evidence="25">
    <location>
        <begin position="657"/>
        <end position="670"/>
    </location>
</feature>
<feature type="strand" evidence="25">
    <location>
        <begin position="674"/>
        <end position="678"/>
    </location>
</feature>
<feature type="strand" evidence="25">
    <location>
        <begin position="683"/>
        <end position="690"/>
    </location>
</feature>
<feature type="helix" evidence="25">
    <location>
        <begin position="695"/>
        <end position="702"/>
    </location>
</feature>
<feature type="strand" evidence="25">
    <location>
        <begin position="706"/>
        <end position="709"/>
    </location>
</feature>
<feature type="helix" evidence="25">
    <location>
        <begin position="711"/>
        <end position="719"/>
    </location>
</feature>
<feature type="helix" evidence="25">
    <location>
        <begin position="726"/>
        <end position="728"/>
    </location>
</feature>
<feature type="turn" evidence="25">
    <location>
        <begin position="731"/>
        <end position="733"/>
    </location>
</feature>
<feature type="helix" evidence="25">
    <location>
        <begin position="736"/>
        <end position="746"/>
    </location>
</feature>
<feature type="strand" evidence="25">
    <location>
        <begin position="748"/>
        <end position="750"/>
    </location>
</feature>
<feature type="turn" evidence="25">
    <location>
        <begin position="755"/>
        <end position="758"/>
    </location>
</feature>
<feature type="strand" evidence="25">
    <location>
        <begin position="762"/>
        <end position="764"/>
    </location>
</feature>
<feature type="helix" evidence="25">
    <location>
        <begin position="772"/>
        <end position="781"/>
    </location>
</feature>
<feature type="strand" evidence="24">
    <location>
        <begin position="786"/>
        <end position="789"/>
    </location>
</feature>
<feature type="helix" evidence="25">
    <location>
        <begin position="790"/>
        <end position="792"/>
    </location>
</feature>
<feature type="strand" evidence="25">
    <location>
        <begin position="794"/>
        <end position="798"/>
    </location>
</feature>
<feature type="strand" evidence="25">
    <location>
        <begin position="809"/>
        <end position="811"/>
    </location>
</feature>
<feature type="helix" evidence="25">
    <location>
        <begin position="813"/>
        <end position="822"/>
    </location>
</feature>
<feature type="helix" evidence="25">
    <location>
        <begin position="828"/>
        <end position="831"/>
    </location>
</feature>
<evidence type="ECO:0000250" key="1">
    <source>
        <dbReference type="UniProtKB" id="Q7TT79"/>
    </source>
</evidence>
<evidence type="ECO:0000255" key="2">
    <source>
        <dbReference type="PROSITE-ProRule" id="PRU00033"/>
    </source>
</evidence>
<evidence type="ECO:0000256" key="3">
    <source>
        <dbReference type="SAM" id="MobiDB-lite"/>
    </source>
</evidence>
<evidence type="ECO:0000269" key="4">
    <source>
    </source>
</evidence>
<evidence type="ECO:0000269" key="5">
    <source>
    </source>
</evidence>
<evidence type="ECO:0000269" key="6">
    <source>
    </source>
</evidence>
<evidence type="ECO:0000269" key="7">
    <source>
    </source>
</evidence>
<evidence type="ECO:0000269" key="8">
    <source>
    </source>
</evidence>
<evidence type="ECO:0000269" key="9">
    <source>
    </source>
</evidence>
<evidence type="ECO:0000269" key="10">
    <source>
    </source>
</evidence>
<evidence type="ECO:0000269" key="11">
    <source>
    </source>
</evidence>
<evidence type="ECO:0000269" key="12">
    <source>
    </source>
</evidence>
<evidence type="ECO:0000269" key="13">
    <source>
    </source>
</evidence>
<evidence type="ECO:0000269" key="14">
    <source>
    </source>
</evidence>
<evidence type="ECO:0000269" key="15">
    <source ref="1"/>
</evidence>
<evidence type="ECO:0000269" key="16">
    <source ref="5"/>
</evidence>
<evidence type="ECO:0000303" key="17">
    <source>
    </source>
</evidence>
<evidence type="ECO:0000303" key="18">
    <source>
    </source>
</evidence>
<evidence type="ECO:0000303" key="19">
    <source>
    </source>
</evidence>
<evidence type="ECO:0000312" key="20">
    <source>
        <dbReference type="HGNC" id="HGNC:6954"/>
    </source>
</evidence>
<evidence type="ECO:0007744" key="21">
    <source>
    </source>
</evidence>
<evidence type="ECO:0007744" key="22">
    <source>
    </source>
</evidence>
<evidence type="ECO:0007829" key="23">
    <source>
        <dbReference type="PDB" id="3PA6"/>
    </source>
</evidence>
<evidence type="ECO:0007829" key="24">
    <source>
        <dbReference type="PDB" id="3SHV"/>
    </source>
</evidence>
<evidence type="ECO:0007829" key="25">
    <source>
        <dbReference type="PDB" id="3U3Z"/>
    </source>
</evidence>
<evidence type="ECO:0007829" key="26">
    <source>
        <dbReference type="PDB" id="7C5D"/>
    </source>
</evidence>
<organism>
    <name type="scientific">Homo sapiens</name>
    <name type="common">Human</name>
    <dbReference type="NCBI Taxonomy" id="9606"/>
    <lineage>
        <taxon>Eukaryota</taxon>
        <taxon>Metazoa</taxon>
        <taxon>Chordata</taxon>
        <taxon>Craniata</taxon>
        <taxon>Vertebrata</taxon>
        <taxon>Euteleostomi</taxon>
        <taxon>Mammalia</taxon>
        <taxon>Eutheria</taxon>
        <taxon>Euarchontoglires</taxon>
        <taxon>Primates</taxon>
        <taxon>Haplorrhini</taxon>
        <taxon>Catarrhini</taxon>
        <taxon>Hominidae</taxon>
        <taxon>Homo</taxon>
    </lineage>
</organism>
<dbReference type="EMBL" id="AX087870">
    <property type="protein sequence ID" value="CAC34661.1"/>
    <property type="molecule type" value="mRNA"/>
</dbReference>
<dbReference type="EMBL" id="AK022909">
    <property type="protein sequence ID" value="BAB14304.1"/>
    <property type="molecule type" value="mRNA"/>
</dbReference>
<dbReference type="EMBL" id="AK301702">
    <property type="protein sequence ID" value="BAG63174.1"/>
    <property type="molecule type" value="mRNA"/>
</dbReference>
<dbReference type="EMBL" id="AC016065">
    <property type="status" value="NOT_ANNOTATED_CDS"/>
    <property type="molecule type" value="Genomic_DNA"/>
</dbReference>
<dbReference type="EMBL" id="AC018398">
    <property type="status" value="NOT_ANNOTATED_CDS"/>
    <property type="molecule type" value="Genomic_DNA"/>
</dbReference>
<dbReference type="EMBL" id="AF287957">
    <property type="status" value="NOT_ANNOTATED_CDS"/>
    <property type="molecule type" value="Genomic_DNA"/>
</dbReference>
<dbReference type="EMBL" id="KC877206">
    <property type="status" value="NOT_ANNOTATED_CDS"/>
    <property type="molecule type" value="Genomic_DNA"/>
</dbReference>
<dbReference type="EMBL" id="KC877207">
    <property type="status" value="NOT_ANNOTATED_CDS"/>
    <property type="molecule type" value="Genomic_DNA"/>
</dbReference>
<dbReference type="EMBL" id="BC030702">
    <property type="protein sequence ID" value="AAH30702.2"/>
    <property type="molecule type" value="mRNA"/>
</dbReference>
<dbReference type="EMBL" id="BK004076">
    <property type="protein sequence ID" value="DAA04567.1"/>
    <property type="molecule type" value="mRNA"/>
</dbReference>
<dbReference type="CCDS" id="CCDS43689.1">
    <molecule id="Q8NEM0-1"/>
</dbReference>
<dbReference type="CCDS" id="CCDS55190.1">
    <molecule id="Q8NEM0-3"/>
</dbReference>
<dbReference type="CCDS" id="CCDS55191.1">
    <molecule id="Q8NEM0-2"/>
</dbReference>
<dbReference type="RefSeq" id="NP_001166045.2">
    <molecule id="Q8NEM0-3"/>
    <property type="nucleotide sequence ID" value="NM_001172574.2"/>
</dbReference>
<dbReference type="RefSeq" id="NP_001166046.1">
    <molecule id="Q8NEM0-2"/>
    <property type="nucleotide sequence ID" value="NM_001172575.2"/>
</dbReference>
<dbReference type="RefSeq" id="NP_001308971.1">
    <property type="nucleotide sequence ID" value="NM_001322042.1"/>
</dbReference>
<dbReference type="RefSeq" id="NP_001308972.1">
    <property type="nucleotide sequence ID" value="NM_001322043.1"/>
</dbReference>
<dbReference type="RefSeq" id="NP_001308974.1">
    <property type="nucleotide sequence ID" value="NM_001322045.1"/>
</dbReference>
<dbReference type="RefSeq" id="NP_078872.3">
    <molecule id="Q8NEM0-1"/>
    <property type="nucleotide sequence ID" value="NM_024596.5"/>
</dbReference>
<dbReference type="PDB" id="2WT8">
    <property type="method" value="X-ray"/>
    <property type="resolution" value="1.60 A"/>
    <property type="chains" value="A/B/C/D=1-95"/>
</dbReference>
<dbReference type="PDB" id="3KTF">
    <property type="method" value="X-ray"/>
    <property type="resolution" value="1.60 A"/>
    <property type="chains" value="A/B/C=1-101"/>
</dbReference>
<dbReference type="PDB" id="3PA6">
    <property type="method" value="X-ray"/>
    <property type="resolution" value="1.50 A"/>
    <property type="chains" value="A/B/C=1-105"/>
</dbReference>
<dbReference type="PDB" id="3SHT">
    <property type="method" value="X-ray"/>
    <property type="resolution" value="1.95 A"/>
    <property type="chains" value="A/B/C=639-835"/>
</dbReference>
<dbReference type="PDB" id="3SHV">
    <property type="method" value="X-ray"/>
    <property type="resolution" value="2.10 A"/>
    <property type="chains" value="A/B=639-835"/>
</dbReference>
<dbReference type="PDB" id="3SZM">
    <property type="method" value="X-ray"/>
    <property type="resolution" value="2.63 A"/>
    <property type="chains" value="A/B/C/D/E/F/G/H=640-835"/>
</dbReference>
<dbReference type="PDB" id="3T1N">
    <property type="method" value="X-ray"/>
    <property type="resolution" value="2.60 A"/>
    <property type="chains" value="A/B=640-835"/>
</dbReference>
<dbReference type="PDB" id="3U3Z">
    <property type="method" value="X-ray"/>
    <property type="resolution" value="1.50 A"/>
    <property type="chains" value="A=640-835"/>
</dbReference>
<dbReference type="PDB" id="7C5D">
    <property type="method" value="X-ray"/>
    <property type="resolution" value="2.15 A"/>
    <property type="chains" value="C/D=322-342"/>
</dbReference>
<dbReference type="PDBsum" id="2WT8"/>
<dbReference type="PDBsum" id="3KTF"/>
<dbReference type="PDBsum" id="3PA6"/>
<dbReference type="PDBsum" id="3SHT"/>
<dbReference type="PDBsum" id="3SHV"/>
<dbReference type="PDBsum" id="3SZM"/>
<dbReference type="PDBsum" id="3T1N"/>
<dbReference type="PDBsum" id="3U3Z"/>
<dbReference type="PDBsum" id="7C5D"/>
<dbReference type="SMR" id="Q8NEM0"/>
<dbReference type="BioGRID" id="122776">
    <property type="interactions" value="100"/>
</dbReference>
<dbReference type="CORUM" id="Q8NEM0"/>
<dbReference type="DIP" id="DIP-39802N"/>
<dbReference type="FunCoup" id="Q8NEM0">
    <property type="interactions" value="2482"/>
</dbReference>
<dbReference type="IntAct" id="Q8NEM0">
    <property type="interactions" value="17"/>
</dbReference>
<dbReference type="MINT" id="Q8NEM0"/>
<dbReference type="STRING" id="9606.ENSP00000342924"/>
<dbReference type="iPTMnet" id="Q8NEM0"/>
<dbReference type="PhosphoSitePlus" id="Q8NEM0"/>
<dbReference type="BioMuta" id="MCPH1"/>
<dbReference type="DMDM" id="296439305"/>
<dbReference type="jPOST" id="Q8NEM0"/>
<dbReference type="MassIVE" id="Q8NEM0"/>
<dbReference type="PaxDb" id="9606-ENSP00000342924"/>
<dbReference type="PeptideAtlas" id="Q8NEM0"/>
<dbReference type="ProteomicsDB" id="20396"/>
<dbReference type="ProteomicsDB" id="20465"/>
<dbReference type="ProteomicsDB" id="73178">
    <molecule id="Q8NEM0-1"/>
</dbReference>
<dbReference type="Antibodypedia" id="2158">
    <property type="antibodies" value="389 antibodies from 32 providers"/>
</dbReference>
<dbReference type="DNASU" id="79648"/>
<dbReference type="Ensembl" id="ENST00000344683.10">
    <molecule id="Q8NEM0-1"/>
    <property type="protein sequence ID" value="ENSP00000342924.5"/>
    <property type="gene ID" value="ENSG00000147316.15"/>
</dbReference>
<dbReference type="Ensembl" id="ENST00000519480.6">
    <molecule id="Q8NEM0-3"/>
    <property type="protein sequence ID" value="ENSP00000430962.1"/>
    <property type="gene ID" value="ENSG00000147316.15"/>
</dbReference>
<dbReference type="Ensembl" id="ENST00000522905.1">
    <molecule id="Q8NEM0-2"/>
    <property type="protein sequence ID" value="ENSP00000430768.1"/>
    <property type="gene ID" value="ENSG00000147316.15"/>
</dbReference>
<dbReference type="GeneID" id="79648"/>
<dbReference type="KEGG" id="hsa:79648"/>
<dbReference type="MANE-Select" id="ENST00000344683.10">
    <property type="protein sequence ID" value="ENSP00000342924.5"/>
    <property type="RefSeq nucleotide sequence ID" value="NM_024596.5"/>
    <property type="RefSeq protein sequence ID" value="NP_078872.3"/>
</dbReference>
<dbReference type="UCSC" id="uc003wqh.4">
    <molecule id="Q8NEM0-1"/>
    <property type="organism name" value="human"/>
</dbReference>
<dbReference type="AGR" id="HGNC:6954"/>
<dbReference type="CTD" id="79648"/>
<dbReference type="DisGeNET" id="79648"/>
<dbReference type="GeneCards" id="MCPH1"/>
<dbReference type="HGNC" id="HGNC:6954">
    <property type="gene designation" value="MCPH1"/>
</dbReference>
<dbReference type="HPA" id="ENSG00000147316">
    <property type="expression patterns" value="Low tissue specificity"/>
</dbReference>
<dbReference type="MalaCards" id="MCPH1"/>
<dbReference type="MIM" id="251200">
    <property type="type" value="phenotype"/>
</dbReference>
<dbReference type="MIM" id="607117">
    <property type="type" value="gene"/>
</dbReference>
<dbReference type="neXtProt" id="NX_Q8NEM0"/>
<dbReference type="OpenTargets" id="ENSG00000147316"/>
<dbReference type="Orphanet" id="2512">
    <property type="disease" value="Autosomal recessive primary microcephaly"/>
</dbReference>
<dbReference type="PharmGKB" id="PA30701"/>
<dbReference type="VEuPathDB" id="HostDB:ENSG00000147316"/>
<dbReference type="eggNOG" id="KOG4362">
    <property type="taxonomic scope" value="Eukaryota"/>
</dbReference>
<dbReference type="GeneTree" id="ENSGT00390000018842"/>
<dbReference type="InParanoid" id="Q8NEM0"/>
<dbReference type="OMA" id="AMEPRMT"/>
<dbReference type="OrthoDB" id="2384350at2759"/>
<dbReference type="PAN-GO" id="Q8NEM0">
    <property type="GO annotations" value="1 GO annotation based on evolutionary models"/>
</dbReference>
<dbReference type="PhylomeDB" id="Q8NEM0"/>
<dbReference type="TreeFam" id="TF332942"/>
<dbReference type="PathwayCommons" id="Q8NEM0"/>
<dbReference type="Reactome" id="R-HSA-2299718">
    <property type="pathway name" value="Condensation of Prophase Chromosomes"/>
</dbReference>
<dbReference type="SignaLink" id="Q8NEM0"/>
<dbReference type="SIGNOR" id="Q8NEM0"/>
<dbReference type="BioGRID-ORCS" id="79648">
    <property type="hits" value="182 hits in 1156 CRISPR screens"/>
</dbReference>
<dbReference type="CD-CODE" id="8C2F96ED">
    <property type="entry name" value="Centrosome"/>
</dbReference>
<dbReference type="ChiTaRS" id="MCPH1">
    <property type="organism name" value="human"/>
</dbReference>
<dbReference type="EvolutionaryTrace" id="Q8NEM0"/>
<dbReference type="GenomeRNAi" id="79648"/>
<dbReference type="Pharos" id="Q8NEM0">
    <property type="development level" value="Tbio"/>
</dbReference>
<dbReference type="PRO" id="PR:Q8NEM0"/>
<dbReference type="Proteomes" id="UP000005640">
    <property type="component" value="Chromosome 8"/>
</dbReference>
<dbReference type="RNAct" id="Q8NEM0">
    <property type="molecule type" value="protein"/>
</dbReference>
<dbReference type="Bgee" id="ENSG00000147316">
    <property type="expression patterns" value="Expressed in secondary oocyte and 137 other cell types or tissues"/>
</dbReference>
<dbReference type="GO" id="GO:0005813">
    <property type="term" value="C:centrosome"/>
    <property type="evidence" value="ECO:0007669"/>
    <property type="project" value="UniProtKB-SubCell"/>
</dbReference>
<dbReference type="GO" id="GO:0005737">
    <property type="term" value="C:cytoplasm"/>
    <property type="evidence" value="ECO:0007669"/>
    <property type="project" value="UniProtKB-KW"/>
</dbReference>
<dbReference type="GO" id="GO:0005654">
    <property type="term" value="C:nucleoplasm"/>
    <property type="evidence" value="ECO:0000304"/>
    <property type="project" value="Reactome"/>
</dbReference>
<dbReference type="GO" id="GO:0042802">
    <property type="term" value="F:identical protein binding"/>
    <property type="evidence" value="ECO:0000353"/>
    <property type="project" value="IntAct"/>
</dbReference>
<dbReference type="GO" id="GO:0060348">
    <property type="term" value="P:bone development"/>
    <property type="evidence" value="ECO:0007669"/>
    <property type="project" value="Ensembl"/>
</dbReference>
<dbReference type="GO" id="GO:0021987">
    <property type="term" value="P:cerebral cortex development"/>
    <property type="evidence" value="ECO:0007669"/>
    <property type="project" value="Ensembl"/>
</dbReference>
<dbReference type="GO" id="GO:0000132">
    <property type="term" value="P:establishment of mitotic spindle orientation"/>
    <property type="evidence" value="ECO:0007669"/>
    <property type="project" value="Ensembl"/>
</dbReference>
<dbReference type="GO" id="GO:0000278">
    <property type="term" value="P:mitotic cell cycle"/>
    <property type="evidence" value="ECO:0000318"/>
    <property type="project" value="GO_Central"/>
</dbReference>
<dbReference type="GO" id="GO:0000122">
    <property type="term" value="P:negative regulation of transcription by RNA polymerase II"/>
    <property type="evidence" value="ECO:0000314"/>
    <property type="project" value="BHF-UCL"/>
</dbReference>
<dbReference type="GO" id="GO:0097150">
    <property type="term" value="P:neuronal stem cell population maintenance"/>
    <property type="evidence" value="ECO:0007669"/>
    <property type="project" value="Ensembl"/>
</dbReference>
<dbReference type="GO" id="GO:0071539">
    <property type="term" value="P:protein localization to centrosome"/>
    <property type="evidence" value="ECO:0007669"/>
    <property type="project" value="Ensembl"/>
</dbReference>
<dbReference type="GO" id="GO:0046605">
    <property type="term" value="P:regulation of centrosome cycle"/>
    <property type="evidence" value="ECO:0007669"/>
    <property type="project" value="Ensembl"/>
</dbReference>
<dbReference type="GO" id="GO:0060623">
    <property type="term" value="P:regulation of chromosome condensation"/>
    <property type="evidence" value="ECO:0007669"/>
    <property type="project" value="Ensembl"/>
</dbReference>
<dbReference type="GO" id="GO:0050727">
    <property type="term" value="P:regulation of inflammatory response"/>
    <property type="evidence" value="ECO:0007669"/>
    <property type="project" value="Ensembl"/>
</dbReference>
<dbReference type="CDD" id="cd17716">
    <property type="entry name" value="BRCT_microcephalin_rpt1"/>
    <property type="match status" value="1"/>
</dbReference>
<dbReference type="CDD" id="cd17736">
    <property type="entry name" value="BRCT_microcephalin_rpt2"/>
    <property type="match status" value="1"/>
</dbReference>
<dbReference type="CDD" id="cd17751">
    <property type="entry name" value="BRCT_microcephalin_rpt3"/>
    <property type="match status" value="1"/>
</dbReference>
<dbReference type="FunFam" id="3.40.50.10190:FF:000047">
    <property type="entry name" value="Microcephalin"/>
    <property type="match status" value="1"/>
</dbReference>
<dbReference type="FunFam" id="3.40.50.10190:FF:000053">
    <property type="entry name" value="Microcephalin"/>
    <property type="match status" value="1"/>
</dbReference>
<dbReference type="FunFam" id="3.40.50.10190:FF:000055">
    <property type="entry name" value="Microcephalin"/>
    <property type="match status" value="1"/>
</dbReference>
<dbReference type="Gene3D" id="3.40.50.10190">
    <property type="entry name" value="BRCT domain"/>
    <property type="match status" value="3"/>
</dbReference>
<dbReference type="IDEAL" id="IID00516"/>
<dbReference type="InterPro" id="IPR001357">
    <property type="entry name" value="BRCT_dom"/>
</dbReference>
<dbReference type="InterPro" id="IPR036420">
    <property type="entry name" value="BRCT_dom_sf"/>
</dbReference>
<dbReference type="InterPro" id="IPR022047">
    <property type="entry name" value="Microcephalin-like"/>
</dbReference>
<dbReference type="InterPro" id="IPR029504">
    <property type="entry name" value="Microcephalin_mammal"/>
</dbReference>
<dbReference type="PANTHER" id="PTHR14625">
    <property type="entry name" value="MICROCEPHALIN"/>
    <property type="match status" value="1"/>
</dbReference>
<dbReference type="PANTHER" id="PTHR14625:SF3">
    <property type="entry name" value="MICROCEPHALIN"/>
    <property type="match status" value="1"/>
</dbReference>
<dbReference type="Pfam" id="PF12258">
    <property type="entry name" value="Microcephalin"/>
    <property type="match status" value="1"/>
</dbReference>
<dbReference type="Pfam" id="PF12738">
    <property type="entry name" value="PTCB-BRCT"/>
    <property type="match status" value="1"/>
</dbReference>
<dbReference type="SMART" id="SM00292">
    <property type="entry name" value="BRCT"/>
    <property type="match status" value="3"/>
</dbReference>
<dbReference type="SUPFAM" id="SSF52113">
    <property type="entry name" value="BRCT domain"/>
    <property type="match status" value="3"/>
</dbReference>
<dbReference type="PROSITE" id="PS50172">
    <property type="entry name" value="BRCT"/>
    <property type="match status" value="3"/>
</dbReference>
<gene>
    <name evidence="20" type="primary">MCPH1</name>
</gene>
<sequence length="835" mass="92849">MAAPILKDVVAYVEVWSSNGTENYSKTFTTQLVDMGAKVSKTFNKQVTHVIFKDGYQSTWDKAQKRGVKLVSVLWVEKCRTAGAHIDESLFPAANMNEHLSSLIKKKRKCMQPKDFNFKTPENDKRFQKKFEKMAKELQRQKTNLDDDVPILLFESNGSLIYTPTIEINSRHHSAMEKRLQEMKEKRENLSPTSSQMIQQSHDNPSNSLCEAPLNISRDTLCSDEYFAGGLHSSFDDLCGNSGCGNQERKLEGSINDIKSDVCISSLVLKANNIHSSPSFTHLDKSSPQKFLSNLSKEEINLQRNIAGKVVTPDQKQAAGMSQETFEEKYRLSPTLSSTKGHLLIHSRPRSSSVKRKRVSHGSHSPPKEKCKRKRSTRRSIMPRLQLCRSEDRLQHVAGPALEALSCGESSYDDYFSPDNLKERYSENLPPESQLPSSPAQLSCRSLSKKERTSIFEMSDFSCVGKKTRTVDITNFTAKTISSPRKTGNGEGRATSSCVTSAPEEALRCCRQAGKEDACPEGNGFSYTIEDPALPKGHDDDLTPLEGSLEEMKEAVGLKSTQNKGTTSKISNSSEGEAQSEHEPCFIVDCNMETSTEEKENLPGGYSGSVKNRPTRHDVLDDSCDGFKDLIKPHEELKKSGRGKKPTRTLVMTSMPSEKQNVVIQVVDKLKGFSIAPDVCETTTHVLSGKPLRTLNVLLGIARGCWVLSYDWVLWSLELGHWISEEPFELSHHFPAAPLCRSECHLSAGPYRGTLFADQPAMFVSPASSPPVAKLCELVHLCGGRVSQVPRQASIVIGPYSGKKKATVKYLSEKWVLDSITQHKVCAPENYLLSQ</sequence>
<name>MCPH1_HUMAN</name>
<reference key="1">
    <citation type="patent" date="2001-03-01" number="WO0114550">
        <title>Prostate cancer-related gene 3 (pg3) and biallelic markers thereof.</title>
        <authorList>
            <person name="Barry C."/>
            <person name="Chumakov I."/>
            <person name="Blumenfeld M."/>
        </authorList>
    </citation>
    <scope>NUCLEOTIDE SEQUENCE [MRNA] (ISOFORM 1)</scope>
    <scope>VARIANTS SER-171 AND GLY-392</scope>
</reference>
<reference key="2">
    <citation type="journal article" date="2004" name="Nat. Genet.">
        <title>Complete sequencing and characterization of 21,243 full-length human cDNAs.</title>
        <authorList>
            <person name="Ota T."/>
            <person name="Suzuki Y."/>
            <person name="Nishikawa T."/>
            <person name="Otsuki T."/>
            <person name="Sugiyama T."/>
            <person name="Irie R."/>
            <person name="Wakamatsu A."/>
            <person name="Hayashi K."/>
            <person name="Sato H."/>
            <person name="Nagai K."/>
            <person name="Kimura K."/>
            <person name="Makita H."/>
            <person name="Sekine M."/>
            <person name="Obayashi M."/>
            <person name="Nishi T."/>
            <person name="Shibahara T."/>
            <person name="Tanaka T."/>
            <person name="Ishii S."/>
            <person name="Yamamoto J."/>
            <person name="Saito K."/>
            <person name="Kawai Y."/>
            <person name="Isono Y."/>
            <person name="Nakamura Y."/>
            <person name="Nagahari K."/>
            <person name="Murakami K."/>
            <person name="Yasuda T."/>
            <person name="Iwayanagi T."/>
            <person name="Wagatsuma M."/>
            <person name="Shiratori A."/>
            <person name="Sudo H."/>
            <person name="Hosoiri T."/>
            <person name="Kaku Y."/>
            <person name="Kodaira H."/>
            <person name="Kondo H."/>
            <person name="Sugawara M."/>
            <person name="Takahashi M."/>
            <person name="Kanda K."/>
            <person name="Yokoi T."/>
            <person name="Furuya T."/>
            <person name="Kikkawa E."/>
            <person name="Omura Y."/>
            <person name="Abe K."/>
            <person name="Kamihara K."/>
            <person name="Katsuta N."/>
            <person name="Sato K."/>
            <person name="Tanikawa M."/>
            <person name="Yamazaki M."/>
            <person name="Ninomiya K."/>
            <person name="Ishibashi T."/>
            <person name="Yamashita H."/>
            <person name="Murakawa K."/>
            <person name="Fujimori K."/>
            <person name="Tanai H."/>
            <person name="Kimata M."/>
            <person name="Watanabe M."/>
            <person name="Hiraoka S."/>
            <person name="Chiba Y."/>
            <person name="Ishida S."/>
            <person name="Ono Y."/>
            <person name="Takiguchi S."/>
            <person name="Watanabe S."/>
            <person name="Yosida M."/>
            <person name="Hotuta T."/>
            <person name="Kusano J."/>
            <person name="Kanehori K."/>
            <person name="Takahashi-Fujii A."/>
            <person name="Hara H."/>
            <person name="Tanase T.-O."/>
            <person name="Nomura Y."/>
            <person name="Togiya S."/>
            <person name="Komai F."/>
            <person name="Hara R."/>
            <person name="Takeuchi K."/>
            <person name="Arita M."/>
            <person name="Imose N."/>
            <person name="Musashino K."/>
            <person name="Yuuki H."/>
            <person name="Oshima A."/>
            <person name="Sasaki N."/>
            <person name="Aotsuka S."/>
            <person name="Yoshikawa Y."/>
            <person name="Matsunawa H."/>
            <person name="Ichihara T."/>
            <person name="Shiohata N."/>
            <person name="Sano S."/>
            <person name="Moriya S."/>
            <person name="Momiyama H."/>
            <person name="Satoh N."/>
            <person name="Takami S."/>
            <person name="Terashima Y."/>
            <person name="Suzuki O."/>
            <person name="Nakagawa S."/>
            <person name="Senoh A."/>
            <person name="Mizoguchi H."/>
            <person name="Goto Y."/>
            <person name="Shimizu F."/>
            <person name="Wakebe H."/>
            <person name="Hishigaki H."/>
            <person name="Watanabe T."/>
            <person name="Sugiyama A."/>
            <person name="Takemoto M."/>
            <person name="Kawakami B."/>
            <person name="Yamazaki M."/>
            <person name="Watanabe K."/>
            <person name="Kumagai A."/>
            <person name="Itakura S."/>
            <person name="Fukuzumi Y."/>
            <person name="Fujimori Y."/>
            <person name="Komiyama M."/>
            <person name="Tashiro H."/>
            <person name="Tanigami A."/>
            <person name="Fujiwara T."/>
            <person name="Ono T."/>
            <person name="Yamada K."/>
            <person name="Fujii Y."/>
            <person name="Ozaki K."/>
            <person name="Hirao M."/>
            <person name="Ohmori Y."/>
            <person name="Kawabata A."/>
            <person name="Hikiji T."/>
            <person name="Kobatake N."/>
            <person name="Inagaki H."/>
            <person name="Ikema Y."/>
            <person name="Okamoto S."/>
            <person name="Okitani R."/>
            <person name="Kawakami T."/>
            <person name="Noguchi S."/>
            <person name="Itoh T."/>
            <person name="Shigeta K."/>
            <person name="Senba T."/>
            <person name="Matsumura K."/>
            <person name="Nakajima Y."/>
            <person name="Mizuno T."/>
            <person name="Morinaga M."/>
            <person name="Sasaki M."/>
            <person name="Togashi T."/>
            <person name="Oyama M."/>
            <person name="Hata H."/>
            <person name="Watanabe M."/>
            <person name="Komatsu T."/>
            <person name="Mizushima-Sugano J."/>
            <person name="Satoh T."/>
            <person name="Shirai Y."/>
            <person name="Takahashi Y."/>
            <person name="Nakagawa K."/>
            <person name="Okumura K."/>
            <person name="Nagase T."/>
            <person name="Nomura N."/>
            <person name="Kikuchi H."/>
            <person name="Masuho Y."/>
            <person name="Yamashita R."/>
            <person name="Nakai K."/>
            <person name="Yada T."/>
            <person name="Nakamura Y."/>
            <person name="Ohara O."/>
            <person name="Isogai T."/>
            <person name="Sugano S."/>
        </authorList>
    </citation>
    <scope>NUCLEOTIDE SEQUENCE [LARGE SCALE MRNA] (ISOFORM 2)</scope>
    <scope>NUCLEOTIDE SEQUENCE [LARGE SCALE MRNA] OF 96-835</scope>
    <scope>VARIANTS SER-171; HIS-314 AND GLY-392</scope>
    <source>
        <tissue>Testis</tissue>
    </source>
</reference>
<reference key="3">
    <citation type="journal article" date="2006" name="Nature">
        <title>DNA sequence and analysis of human chromosome 8.</title>
        <authorList>
            <person name="Nusbaum C."/>
            <person name="Mikkelsen T.S."/>
            <person name="Zody M.C."/>
            <person name="Asakawa S."/>
            <person name="Taudien S."/>
            <person name="Garber M."/>
            <person name="Kodira C.D."/>
            <person name="Schueler M.G."/>
            <person name="Shimizu A."/>
            <person name="Whittaker C.A."/>
            <person name="Chang J.L."/>
            <person name="Cuomo C.A."/>
            <person name="Dewar K."/>
            <person name="FitzGerald M.G."/>
            <person name="Yang X."/>
            <person name="Allen N.R."/>
            <person name="Anderson S."/>
            <person name="Asakawa T."/>
            <person name="Blechschmidt K."/>
            <person name="Bloom T."/>
            <person name="Borowsky M.L."/>
            <person name="Butler J."/>
            <person name="Cook A."/>
            <person name="Corum B."/>
            <person name="DeArellano K."/>
            <person name="DeCaprio D."/>
            <person name="Dooley K.T."/>
            <person name="Dorris L. III"/>
            <person name="Engels R."/>
            <person name="Gloeckner G."/>
            <person name="Hafez N."/>
            <person name="Hagopian D.S."/>
            <person name="Hall J.L."/>
            <person name="Ishikawa S.K."/>
            <person name="Jaffe D.B."/>
            <person name="Kamat A."/>
            <person name="Kudoh J."/>
            <person name="Lehmann R."/>
            <person name="Lokitsang T."/>
            <person name="Macdonald P."/>
            <person name="Major J.E."/>
            <person name="Matthews C.D."/>
            <person name="Mauceli E."/>
            <person name="Menzel U."/>
            <person name="Mihalev A.H."/>
            <person name="Minoshima S."/>
            <person name="Murayama Y."/>
            <person name="Naylor J.W."/>
            <person name="Nicol R."/>
            <person name="Nguyen C."/>
            <person name="O'Leary S.B."/>
            <person name="O'Neill K."/>
            <person name="Parker S.C.J."/>
            <person name="Polley A."/>
            <person name="Raymond C.K."/>
            <person name="Reichwald K."/>
            <person name="Rodriguez J."/>
            <person name="Sasaki T."/>
            <person name="Schilhabel M."/>
            <person name="Siddiqui R."/>
            <person name="Smith C.L."/>
            <person name="Sneddon T.P."/>
            <person name="Talamas J.A."/>
            <person name="Tenzin P."/>
            <person name="Topham K."/>
            <person name="Venkataraman V."/>
            <person name="Wen G."/>
            <person name="Yamazaki S."/>
            <person name="Young S.K."/>
            <person name="Zeng Q."/>
            <person name="Zimmer A.R."/>
            <person name="Rosenthal A."/>
            <person name="Birren B.W."/>
            <person name="Platzer M."/>
            <person name="Shimizu N."/>
            <person name="Lander E.S."/>
        </authorList>
    </citation>
    <scope>NUCLEOTIDE SEQUENCE [LARGE SCALE GENOMIC DNA]</scope>
</reference>
<reference key="4">
    <citation type="journal article" date="2004" name="Genome Res.">
        <title>The status, quality, and expansion of the NIH full-length cDNA project: the Mammalian Gene Collection (MGC).</title>
        <authorList>
            <consortium name="The MGC Project Team"/>
        </authorList>
    </citation>
    <scope>NUCLEOTIDE SEQUENCE [LARGE SCALE MRNA] (ISOFORM 2)</scope>
    <scope>VARIANTS SER-171; HIS-314 AND GLY-392</scope>
    <source>
        <tissue>Testis</tissue>
    </source>
</reference>
<reference key="5">
    <citation type="submission" date="2003-12" db="EMBL/GenBank/DDBJ databases">
        <authorList>
            <person name="Lin S.-Y."/>
            <person name="Elledge S.J."/>
        </authorList>
    </citation>
    <scope>NUCLEOTIDE SEQUENCE [MRNA] OF 96-835 (ISOFORM 1)</scope>
    <scope>VARIANTS SER-171; HIS-314 AND GLY-392</scope>
</reference>
<reference key="6">
    <citation type="journal article" date="2002" name="Am. J. Hum. Genet.">
        <title>Identification of microcephalin, a protein implicated in determining the size of the human brain.</title>
        <authorList>
            <person name="Jackson A.P."/>
            <person name="Eastwood H."/>
            <person name="Bell S.M."/>
            <person name="Toomes C."/>
            <person name="Adu J."/>
            <person name="Carr I.M."/>
            <person name="Roberts E."/>
            <person name="Hampshire D.J."/>
            <person name="Crow Y.J."/>
            <person name="Mighell A.J."/>
            <person name="Karbani G."/>
            <person name="Jafri H."/>
            <person name="Rashid Y."/>
            <person name="Mueller R.F."/>
            <person name="Markham A.F."/>
            <person name="Woods C.G."/>
        </authorList>
    </citation>
    <scope>FUNCTION</scope>
    <scope>TISSUE SPECIFICITY</scope>
    <scope>INVOLVEMENT IN MCPH1</scope>
</reference>
<reference key="7">
    <citation type="journal article" date="2004" name="Am. J. Hum. Genet.">
        <title>Mutations in microcephalin cause aberrant regulation of chromosome condensation.</title>
        <authorList>
            <person name="Trimborn M."/>
            <person name="Bell S.M."/>
            <person name="Felix C."/>
            <person name="Rashid Y."/>
            <person name="Jafri H."/>
            <person name="Griffiths P.D."/>
            <person name="Neumann L.M."/>
            <person name="Krebs A."/>
            <person name="Reis A."/>
            <person name="Sperling K."/>
            <person name="Neitzel H."/>
            <person name="Jackson A.P."/>
        </authorList>
    </citation>
    <scope>FUNCTION</scope>
    <scope>INVOLVEMENT IN MCPH1</scope>
</reference>
<reference key="8">
    <citation type="journal article" date="2004" name="J. Biol. Chem.">
        <title>Microcephalin is a DNA damage response protein involved in regulation of CHK1 and BRCA1.</title>
        <authorList>
            <person name="Xu X."/>
            <person name="Lee J."/>
            <person name="Stern D.F."/>
        </authorList>
    </citation>
    <scope>FUNCTION</scope>
</reference>
<reference key="9">
    <citation type="journal article" date="2006" name="Cell Cycle">
        <title>Microcephalin encodes a centrosomal protein.</title>
        <authorList>
            <person name="Zhong X."/>
            <person name="Pfeifer G.P."/>
            <person name="Xu X."/>
        </authorList>
    </citation>
    <scope>SUBCELLULAR LOCATION</scope>
</reference>
<reference key="10">
    <citation type="journal article" date="2008" name="Proc. Natl. Acad. Sci. U.S.A.">
        <title>A quantitative atlas of mitotic phosphorylation.</title>
        <authorList>
            <person name="Dephoure N."/>
            <person name="Zhou C."/>
            <person name="Villen J."/>
            <person name="Beausoleil S.A."/>
            <person name="Bakalarski C.E."/>
            <person name="Elledge S.J."/>
            <person name="Gygi S.P."/>
        </authorList>
    </citation>
    <scope>PHOSPHORYLATION [LARGE SCALE ANALYSIS] AT SER-333</scope>
    <scope>IDENTIFICATION BY MASS SPECTROMETRY [LARGE SCALE ANALYSIS]</scope>
    <source>
        <tissue>Cervix carcinoma</tissue>
    </source>
</reference>
<reference key="11">
    <citation type="journal article" date="2013" name="J. Proteome Res.">
        <title>Toward a comprehensive characterization of a human cancer cell phosphoproteome.</title>
        <authorList>
            <person name="Zhou H."/>
            <person name="Di Palma S."/>
            <person name="Preisinger C."/>
            <person name="Peng M."/>
            <person name="Polat A.N."/>
            <person name="Heck A.J."/>
            <person name="Mohammed S."/>
        </authorList>
    </citation>
    <scope>PHOSPHORYLATION [LARGE SCALE ANALYSIS] AT SER-279; SER-287; THR-335 AND SER-548</scope>
    <scope>IDENTIFICATION BY MASS SPECTROMETRY [LARGE SCALE ANALYSIS]</scope>
    <source>
        <tissue>Cervix carcinoma</tissue>
        <tissue>Erythroleukemia</tissue>
    </source>
</reference>
<reference key="12">
    <citation type="journal article" date="2010" name="J. Mol. Biol.">
        <title>A pocket on the surface of the N-terminal BRCT domain of Mcph1 is required to prevent abnormal chromosome condensation.</title>
        <authorList>
            <person name="Richards M.W."/>
            <person name="Leung J.W."/>
            <person name="Roe S.M."/>
            <person name="Li K."/>
            <person name="Chen J."/>
            <person name="Bayliss R."/>
        </authorList>
    </citation>
    <scope>X-RAY CRYSTALLOGRAPHY (1.6 ANGSTROMS) OF 1-95</scope>
</reference>
<reference key="13">
    <citation type="journal article" date="2012" name="J. Biol. Chem.">
        <title>Molecular basis for the association of microcephalin (MCPH1) protein with the cell division cycle protein 27 (Cdc27) subunit of the anaphase-promoting complex.</title>
        <authorList>
            <person name="Singh N."/>
            <person name="Wiltshire T.D."/>
            <person name="Thompson J.R."/>
            <person name="Mer G."/>
            <person name="Couch F.J."/>
        </authorList>
    </citation>
    <scope>X-RAY CRYSTALLOGRAPHY (2.6 ANGSTROMS) OF 640-835 IN COMPLEX WITH PHOSPHORYLATED CDC27 PEPTIDE</scope>
</reference>
<reference key="14">
    <citation type="journal article" date="2012" name="J. Struct. Biol.">
        <title>Specific recognition of phosphorylated tail of H2AX by the tandem BRCT domains of MCPH1 revealed by complex structure.</title>
        <authorList>
            <person name="Shao Z."/>
            <person name="Li F."/>
            <person name="Sy S.M."/>
            <person name="Yan W."/>
            <person name="Zhang Z."/>
            <person name="Gong D."/>
            <person name="Wen B."/>
            <person name="Huen M.S."/>
            <person name="Gong Q."/>
            <person name="Wu J."/>
            <person name="Shi Y."/>
        </authorList>
    </citation>
    <scope>X-RAY CRYSTALLOGRAPHY (1.95 ANGSTROMS) OF 639-835 OF MUTANT ALA-761 ALONE AND IN COMPLEX WITH H2FAX PEPTIDE</scope>
</reference>
<reference key="15">
    <citation type="journal article" date="2012" name="Proc. Natl. Acad. Sci. U.S.A.">
        <title>Dual recognition of phosphoserine and phosphotyrosine in histone variant H2A.X by DNA damage response protein MCPH1.</title>
        <authorList>
            <person name="Singh N."/>
            <person name="Basnet H."/>
            <person name="Wiltshire T.D."/>
            <person name="Mohammad D.H."/>
            <person name="Thompson J.R."/>
            <person name="Heroux A."/>
            <person name="Botuyan M.V."/>
            <person name="Yaffe M.B."/>
            <person name="Couch F.J."/>
            <person name="Rosenfeld M.G."/>
            <person name="Mer G."/>
        </authorList>
    </citation>
    <scope>X-RAY CRYSTALLOGRAPHY (1.5 ANGSTROMS) OF 640-835</scope>
</reference>
<reference key="16">
    <citation type="journal article" date="2005" name="Hum. Mutat.">
        <title>The first missense alteration in the MCPH1 gene causes autosomal recessive microcephaly with an extremely mild cellular and clinical phenotype.</title>
        <authorList>
            <person name="Trimborn M."/>
            <person name="Richter R."/>
            <person name="Sternberg N."/>
            <person name="Gavvovidis I."/>
            <person name="Schindler D."/>
            <person name="Jackson A.P."/>
            <person name="Prott E.-C."/>
            <person name="Sperling K."/>
            <person name="Gillessen-Kaesbach G."/>
            <person name="Neitzel H."/>
        </authorList>
    </citation>
    <scope>VARIANT MCPH1 ARG-27</scope>
</reference>
<reference key="17">
    <citation type="journal article" date="2008" name="Hum. Mol. Genet.">
        <title>A common SNP of MCPH1 is associated with cranial volume variation in Chinese population.</title>
        <authorList>
            <person name="Wang J.-K."/>
            <person name="Li Y."/>
            <person name="Su B."/>
        </authorList>
    </citation>
    <scope>VARIANTS HIS-314; VAL-761 AND SER-828</scope>
</reference>
<comment type="function">
    <text evidence="4 6 7">Implicated in chromosome condensation and DNA damage induced cellular responses. May play a role in neurogenesis and regulation of the size of the cerebral cortex.</text>
</comment>
<comment type="subunit">
    <text evidence="13 14">Interacts with CDC27 and maybe other components of the APC/C complex. Interacts with histone variant H2AX under DNA damage conditions.</text>
</comment>
<comment type="interaction">
    <interactant intactId="EBI-1565483">
        <id>Q8NEM0</id>
    </interactant>
    <interactant intactId="EBI-739773">
        <id>Q9BSW2</id>
        <label>CRACR2A</label>
    </interactant>
    <organismsDiffer>false</organismsDiffer>
    <experiments>2</experiments>
</comment>
<comment type="interaction">
    <interactant intactId="EBI-1565483">
        <id>Q8NEM0</id>
    </interactant>
    <interactant intactId="EBI-448924">
        <id>Q01094</id>
        <label>E2F1</label>
    </interactant>
    <organismsDiffer>false</organismsDiffer>
    <experiments>6</experiments>
</comment>
<comment type="interaction">
    <interactant intactId="EBI-1565483">
        <id>Q8NEM0</id>
    </interactant>
    <interactant intactId="EBI-1565483">
        <id>Q8NEM0</id>
        <label>MCPH1</label>
    </interactant>
    <organismsDiffer>false</organismsDiffer>
    <experiments>2</experiments>
</comment>
<comment type="interaction">
    <interactant intactId="EBI-1565483">
        <id>Q8NEM0</id>
    </interactant>
    <interactant intactId="EBI-706637">
        <id>Q15554</id>
        <label>TERF2</label>
    </interactant>
    <organismsDiffer>false</organismsDiffer>
    <experiments>5</experiments>
</comment>
<comment type="subcellular location">
    <subcellularLocation>
        <location evidence="10">Cytoplasm</location>
        <location evidence="10">Cytoskeleton</location>
        <location evidence="10">Microtubule organizing center</location>
        <location evidence="10">Centrosome</location>
    </subcellularLocation>
</comment>
<comment type="alternative products">
    <event type="alternative splicing"/>
    <isoform>
        <id>Q8NEM0-1</id>
        <name>1</name>
        <sequence type="displayed"/>
    </isoform>
    <isoform>
        <id>Q8NEM0-2</id>
        <name>2</name>
        <sequence type="described" ref="VSP_046135 VSP_046136 VSP_046137"/>
    </isoform>
    <isoform>
        <id>Q8NEM0-3</id>
        <name>3</name>
        <sequence type="described" ref="VSP_046136 VSP_046137"/>
    </isoform>
</comment>
<comment type="tissue specificity">
    <text evidence="4">Expressed in fetal brain, liver and kidney.</text>
</comment>
<comment type="domain">
    <text evidence="12">BRCT domain 1 is required to prevent abnormal chromosome condensation. It binds directly to the SWI-SNF chromatin remodeling complex (PubMed:19925808).</text>
</comment>
<comment type="domain">
    <text>BRCT domains 2 and 3 recognize phosphoserine/phosphothreonine marks on proteins with high selectivity, and mediate interaction with phosphorylated CDC27. They also mediate the dual recognition of phosphoserine and phosphotyrosine in the C-terminal tail of histone H2AX (PubMed:22139841, PubMed:22908299).</text>
</comment>
<comment type="disease" evidence="4 6 9">
    <disease id="DI-00751">
        <name>Microcephaly 1, primary, autosomal recessive</name>
        <acronym>MCPH1</acronym>
        <description>A disease defined as a head circumference more than 3 standard deviations below the age-related mean. Brain weight is markedly reduced and the cerebral cortex is disproportionately small. Despite this marked reduction in size, the gyral pattern is relatively well preserved, with no major abnormality in cortical architecture. Affected individuals have mild to severe intellectual disability. Primary microcephaly is further defined by the absence of other syndromic features or significant neurological deficits due to degenerative brain disorder. Some MCHP1 patients also present growth retardation, short stature, and misregulated chromosome condensation as indicated by a high number of prophase-like cells detected in routine cytogenetic preparations and poor-quality metaphase G-banding.</description>
        <dbReference type="MIM" id="251200"/>
    </disease>
    <text>The disease is caused by variants affecting the gene represented in this entry.</text>
</comment>
<comment type="miscellaneous">
    <text>MCPH1 deficient cells exhibit a delay in post-mitotic chromosome decondensation.</text>
</comment>
<comment type="online information" name="Protein Spotlight">
    <link uri="https://www.proteinspotlight.org/back_issues/064"/>
    <text>A grey matter - Issue 64 of November 2005</text>
</comment>
<comment type="online information" name="Atlas of Genetics and Cytogenetics in Oncology and Haematology">
    <link uri="https://atlasgeneticsoncology.org/gene/44370/MCPH1"/>
</comment>
<keyword id="KW-0002">3D-structure</keyword>
<keyword id="KW-0025">Alternative splicing</keyword>
<keyword id="KW-0963">Cytoplasm</keyword>
<keyword id="KW-0206">Cytoskeleton</keyword>
<keyword id="KW-0991">Intellectual disability</keyword>
<keyword id="KW-0597">Phosphoprotein</keyword>
<keyword id="KW-0905">Primary microcephaly</keyword>
<keyword id="KW-1267">Proteomics identification</keyword>
<keyword id="KW-1185">Reference proteome</keyword>
<keyword id="KW-0677">Repeat</keyword>
<protein>
    <recommendedName>
        <fullName evidence="17">Microcephalin</fullName>
    </recommendedName>
</protein>
<accession>Q8NEM0</accession>
<accession>A0A075B6F8</accession>
<accession>B4DWW2</accession>
<accession>E9PGU5</accession>
<accession>E9PH63</accession>
<accession>Q66GU1</accession>
<accession>Q9H9C7</accession>
<proteinExistence type="evidence at protein level"/>